<proteinExistence type="inferred from homology"/>
<dbReference type="EC" id="2.7.1.71" evidence="1"/>
<dbReference type="EMBL" id="CP001048">
    <property type="protein sequence ID" value="ACC90894.1"/>
    <property type="molecule type" value="Genomic_DNA"/>
</dbReference>
<dbReference type="RefSeq" id="WP_002208899.1">
    <property type="nucleotide sequence ID" value="NZ_CP009780.1"/>
</dbReference>
<dbReference type="SMR" id="B2K5T5"/>
<dbReference type="GeneID" id="96663260"/>
<dbReference type="KEGG" id="ypb:YPTS_3945"/>
<dbReference type="PATRIC" id="fig|502801.10.peg.3409"/>
<dbReference type="UniPathway" id="UPA00053">
    <property type="reaction ID" value="UER00088"/>
</dbReference>
<dbReference type="GO" id="GO:0005829">
    <property type="term" value="C:cytosol"/>
    <property type="evidence" value="ECO:0007669"/>
    <property type="project" value="TreeGrafter"/>
</dbReference>
<dbReference type="GO" id="GO:0005524">
    <property type="term" value="F:ATP binding"/>
    <property type="evidence" value="ECO:0007669"/>
    <property type="project" value="UniProtKB-UniRule"/>
</dbReference>
<dbReference type="GO" id="GO:0000287">
    <property type="term" value="F:magnesium ion binding"/>
    <property type="evidence" value="ECO:0007669"/>
    <property type="project" value="UniProtKB-UniRule"/>
</dbReference>
<dbReference type="GO" id="GO:0004765">
    <property type="term" value="F:shikimate kinase activity"/>
    <property type="evidence" value="ECO:0007669"/>
    <property type="project" value="UniProtKB-UniRule"/>
</dbReference>
<dbReference type="GO" id="GO:0008652">
    <property type="term" value="P:amino acid biosynthetic process"/>
    <property type="evidence" value="ECO:0007669"/>
    <property type="project" value="UniProtKB-KW"/>
</dbReference>
<dbReference type="GO" id="GO:0009073">
    <property type="term" value="P:aromatic amino acid family biosynthetic process"/>
    <property type="evidence" value="ECO:0007669"/>
    <property type="project" value="UniProtKB-KW"/>
</dbReference>
<dbReference type="GO" id="GO:0009423">
    <property type="term" value="P:chorismate biosynthetic process"/>
    <property type="evidence" value="ECO:0007669"/>
    <property type="project" value="UniProtKB-UniRule"/>
</dbReference>
<dbReference type="CDD" id="cd00464">
    <property type="entry name" value="SK"/>
    <property type="match status" value="1"/>
</dbReference>
<dbReference type="FunFam" id="3.40.50.300:FF:000099">
    <property type="entry name" value="Shikimate kinase 1"/>
    <property type="match status" value="1"/>
</dbReference>
<dbReference type="Gene3D" id="3.40.50.300">
    <property type="entry name" value="P-loop containing nucleotide triphosphate hydrolases"/>
    <property type="match status" value="1"/>
</dbReference>
<dbReference type="HAMAP" id="MF_00109">
    <property type="entry name" value="Shikimate_kinase"/>
    <property type="match status" value="1"/>
</dbReference>
<dbReference type="InterPro" id="IPR027417">
    <property type="entry name" value="P-loop_NTPase"/>
</dbReference>
<dbReference type="InterPro" id="IPR031322">
    <property type="entry name" value="Shikimate/glucono_kinase"/>
</dbReference>
<dbReference type="InterPro" id="IPR000623">
    <property type="entry name" value="Shikimate_kinase/TSH1"/>
</dbReference>
<dbReference type="InterPro" id="IPR023000">
    <property type="entry name" value="Shikimate_kinase_CS"/>
</dbReference>
<dbReference type="NCBIfam" id="NF003456">
    <property type="entry name" value="PRK05057.1"/>
    <property type="match status" value="1"/>
</dbReference>
<dbReference type="PANTHER" id="PTHR21087">
    <property type="entry name" value="SHIKIMATE KINASE"/>
    <property type="match status" value="1"/>
</dbReference>
<dbReference type="PANTHER" id="PTHR21087:SF16">
    <property type="entry name" value="SHIKIMATE KINASE 1, CHLOROPLASTIC"/>
    <property type="match status" value="1"/>
</dbReference>
<dbReference type="Pfam" id="PF01202">
    <property type="entry name" value="SKI"/>
    <property type="match status" value="1"/>
</dbReference>
<dbReference type="PRINTS" id="PR01100">
    <property type="entry name" value="SHIKIMTKNASE"/>
</dbReference>
<dbReference type="SUPFAM" id="SSF52540">
    <property type="entry name" value="P-loop containing nucleoside triphosphate hydrolases"/>
    <property type="match status" value="1"/>
</dbReference>
<dbReference type="PROSITE" id="PS01128">
    <property type="entry name" value="SHIKIMATE_KINASE"/>
    <property type="match status" value="1"/>
</dbReference>
<name>AROK_YERPB</name>
<keyword id="KW-0028">Amino-acid biosynthesis</keyword>
<keyword id="KW-0057">Aromatic amino acid biosynthesis</keyword>
<keyword id="KW-0067">ATP-binding</keyword>
<keyword id="KW-0963">Cytoplasm</keyword>
<keyword id="KW-0418">Kinase</keyword>
<keyword id="KW-0460">Magnesium</keyword>
<keyword id="KW-0479">Metal-binding</keyword>
<keyword id="KW-0547">Nucleotide-binding</keyword>
<keyword id="KW-0808">Transferase</keyword>
<organism>
    <name type="scientific">Yersinia pseudotuberculosis serotype IB (strain PB1/+)</name>
    <dbReference type="NCBI Taxonomy" id="502801"/>
    <lineage>
        <taxon>Bacteria</taxon>
        <taxon>Pseudomonadati</taxon>
        <taxon>Pseudomonadota</taxon>
        <taxon>Gammaproteobacteria</taxon>
        <taxon>Enterobacterales</taxon>
        <taxon>Yersiniaceae</taxon>
        <taxon>Yersinia</taxon>
    </lineage>
</organism>
<protein>
    <recommendedName>
        <fullName evidence="1">Shikimate kinase 1</fullName>
        <shortName evidence="1">SK 1</shortName>
        <ecNumber evidence="1">2.7.1.71</ecNumber>
    </recommendedName>
</protein>
<reference key="1">
    <citation type="submission" date="2008-04" db="EMBL/GenBank/DDBJ databases">
        <title>Complete sequence of Yersinia pseudotuberculosis PB1/+.</title>
        <authorList>
            <person name="Copeland A."/>
            <person name="Lucas S."/>
            <person name="Lapidus A."/>
            <person name="Glavina del Rio T."/>
            <person name="Dalin E."/>
            <person name="Tice H."/>
            <person name="Bruce D."/>
            <person name="Goodwin L."/>
            <person name="Pitluck S."/>
            <person name="Munk A.C."/>
            <person name="Brettin T."/>
            <person name="Detter J.C."/>
            <person name="Han C."/>
            <person name="Tapia R."/>
            <person name="Schmutz J."/>
            <person name="Larimer F."/>
            <person name="Land M."/>
            <person name="Hauser L."/>
            <person name="Challacombe J.F."/>
            <person name="Green L."/>
            <person name="Lindler L.E."/>
            <person name="Nikolich M.P."/>
            <person name="Richardson P."/>
        </authorList>
    </citation>
    <scope>NUCLEOTIDE SEQUENCE [LARGE SCALE GENOMIC DNA]</scope>
    <source>
        <strain>PB1/+</strain>
    </source>
</reference>
<gene>
    <name evidence="1" type="primary">aroK</name>
    <name type="ordered locus">YPTS_3945</name>
</gene>
<sequence length="173" mass="19532">MAEKRNIFLVGPMGAGKSTIGRQLAQQLNMEFFDSDQEIERRTGADVGWVFDVEGEEGFRDREEKVINELTEKQGIVLATGGGSVKSRETRNRLSARGVVVYLETTIEKQLARTQRDKKRPLLQVDEPPREVLEALAKERNPLYEEIADVTIRTDDQSAKVVANQIINMLESN</sequence>
<accession>B2K5T5</accession>
<feature type="chain" id="PRO_1000094435" description="Shikimate kinase 1">
    <location>
        <begin position="1"/>
        <end position="173"/>
    </location>
</feature>
<feature type="binding site" evidence="1">
    <location>
        <begin position="14"/>
        <end position="19"/>
    </location>
    <ligand>
        <name>ATP</name>
        <dbReference type="ChEBI" id="CHEBI:30616"/>
    </ligand>
</feature>
<feature type="binding site" evidence="1">
    <location>
        <position position="18"/>
    </location>
    <ligand>
        <name>Mg(2+)</name>
        <dbReference type="ChEBI" id="CHEBI:18420"/>
    </ligand>
</feature>
<feature type="binding site" evidence="1">
    <location>
        <position position="36"/>
    </location>
    <ligand>
        <name>substrate</name>
    </ligand>
</feature>
<feature type="binding site" evidence="1">
    <location>
        <position position="60"/>
    </location>
    <ligand>
        <name>substrate</name>
    </ligand>
</feature>
<feature type="binding site" evidence="1">
    <location>
        <position position="82"/>
    </location>
    <ligand>
        <name>substrate</name>
    </ligand>
</feature>
<feature type="binding site" evidence="1">
    <location>
        <position position="120"/>
    </location>
    <ligand>
        <name>ATP</name>
        <dbReference type="ChEBI" id="CHEBI:30616"/>
    </ligand>
</feature>
<feature type="binding site" evidence="1">
    <location>
        <position position="140"/>
    </location>
    <ligand>
        <name>substrate</name>
    </ligand>
</feature>
<feature type="binding site" evidence="1">
    <location>
        <position position="157"/>
    </location>
    <ligand>
        <name>ATP</name>
        <dbReference type="ChEBI" id="CHEBI:30616"/>
    </ligand>
</feature>
<comment type="function">
    <text evidence="1">Catalyzes the specific phosphorylation of the 3-hydroxyl group of shikimic acid using ATP as a cosubstrate.</text>
</comment>
<comment type="catalytic activity">
    <reaction evidence="1">
        <text>shikimate + ATP = 3-phosphoshikimate + ADP + H(+)</text>
        <dbReference type="Rhea" id="RHEA:13121"/>
        <dbReference type="ChEBI" id="CHEBI:15378"/>
        <dbReference type="ChEBI" id="CHEBI:30616"/>
        <dbReference type="ChEBI" id="CHEBI:36208"/>
        <dbReference type="ChEBI" id="CHEBI:145989"/>
        <dbReference type="ChEBI" id="CHEBI:456216"/>
        <dbReference type="EC" id="2.7.1.71"/>
    </reaction>
</comment>
<comment type="cofactor">
    <cofactor evidence="1">
        <name>Mg(2+)</name>
        <dbReference type="ChEBI" id="CHEBI:18420"/>
    </cofactor>
    <text evidence="1">Binds 1 Mg(2+) ion per subunit.</text>
</comment>
<comment type="pathway">
    <text evidence="1">Metabolic intermediate biosynthesis; chorismate biosynthesis; chorismate from D-erythrose 4-phosphate and phosphoenolpyruvate: step 5/7.</text>
</comment>
<comment type="subunit">
    <text evidence="1">Monomer.</text>
</comment>
<comment type="subcellular location">
    <subcellularLocation>
        <location evidence="1">Cytoplasm</location>
    </subcellularLocation>
</comment>
<comment type="similarity">
    <text evidence="1">Belongs to the shikimate kinase family.</text>
</comment>
<evidence type="ECO:0000255" key="1">
    <source>
        <dbReference type="HAMAP-Rule" id="MF_00109"/>
    </source>
</evidence>